<evidence type="ECO:0000255" key="1"/>
<evidence type="ECO:0000269" key="2">
    <source>
    </source>
</evidence>
<evidence type="ECO:0000303" key="3">
    <source>
    </source>
</evidence>
<evidence type="ECO:0000305" key="4">
    <source>
    </source>
</evidence>
<evidence type="ECO:0000312" key="5">
    <source>
        <dbReference type="EMBL" id="UEP64309.1"/>
    </source>
</evidence>
<accession>A0A8K1YTT5</accession>
<comment type="function">
    <text evidence="2">This endoparasitoid wasp peptide has immununosuppressive and insecticidal activities. Suppress cellular immunity which is detectable as a reduction of hemocyte spread index in the host. In vivo, ingestion of this peptide moderately reduces leaf consumption of D.saccharalis, a permissive host for the lepidoptere C.flavipes.</text>
</comment>
<comment type="subcellular location">
    <subcellularLocation>
        <location evidence="4">Secreted</location>
    </subcellularLocation>
</comment>
<comment type="tissue specificity">
    <text evidence="4">Abundantly expressed by teratocytes, which are extra-embryonic cells released by parasitoid wasps into their hosts during larval eclosion.</text>
</comment>
<comment type="domain">
    <text evidence="4">The presence of a 'disulfide through disulfide knot' structurally defines this protein as a knottin.</text>
</comment>
<comment type="PTM">
    <text evidence="4">Contains 4 disulfide bonds.</text>
</comment>
<comment type="miscellaneous">
    <text evidence="2">Negative results: does not influence host total hemocyte count (PubMed:36434808). Does not reduce hemocyte encapsulation in the host (PubMed:36434808). Has no effect on humoral immune system, since it does not influence the activities of prophenoloxidase and phenoloxidase in the hemolymph of larval Diatraea saccharalis (PubMed:36434808). Non-toxic to human cells, Gram-positive or -negative bacteria. In vivo, ingestion of this peptide does not impact larval mortality of both lepidopteran species D.saccharalis and S.frugiperda, which are permissive and non-permissive hosts for C.flavipes, respectively (PubMed:36434808).</text>
</comment>
<sequence length="82" mass="9093">MAKILLTFIILTCLIVTITPAVYDYACYKKGCSKIQGRCSTNADCCDGYQCHPQTASWQVVQKNGCYPINPVPCSQLQQKNV</sequence>
<dbReference type="EMBL" id="MZ746716">
    <property type="protein sequence ID" value="UEP64309.1"/>
    <property type="molecule type" value="mRNA"/>
</dbReference>
<dbReference type="GO" id="GO:0005576">
    <property type="term" value="C:extracellular region"/>
    <property type="evidence" value="ECO:0007669"/>
    <property type="project" value="UniProtKB-SubCell"/>
</dbReference>
<dbReference type="GO" id="GO:0008200">
    <property type="term" value="F:ion channel inhibitor activity"/>
    <property type="evidence" value="ECO:0007669"/>
    <property type="project" value="InterPro"/>
</dbReference>
<dbReference type="GO" id="GO:0090729">
    <property type="term" value="F:toxin activity"/>
    <property type="evidence" value="ECO:0007669"/>
    <property type="project" value="UniProtKB-KW"/>
</dbReference>
<dbReference type="InterPro" id="IPR011696">
    <property type="entry name" value="Huwentoxin-1"/>
</dbReference>
<dbReference type="Pfam" id="PF07740">
    <property type="entry name" value="Toxin_12"/>
    <property type="match status" value="1"/>
</dbReference>
<organism>
    <name type="scientific">Cotesia flavipes</name>
    <name type="common">Parasitic wasp</name>
    <name type="synonym">Apanteles flavipes</name>
    <dbReference type="NCBI Taxonomy" id="89805"/>
    <lineage>
        <taxon>Eukaryota</taxon>
        <taxon>Metazoa</taxon>
        <taxon>Ecdysozoa</taxon>
        <taxon>Arthropoda</taxon>
        <taxon>Hexapoda</taxon>
        <taxon>Insecta</taxon>
        <taxon>Pterygota</taxon>
        <taxon>Neoptera</taxon>
        <taxon>Endopterygota</taxon>
        <taxon>Hymenoptera</taxon>
        <taxon>Apocrita</taxon>
        <taxon>Ichneumonoidea</taxon>
        <taxon>Braconidae</taxon>
        <taxon>Microgastrinae</taxon>
        <taxon>Cotesia</taxon>
    </lineage>
</organism>
<keyword id="KW-1015">Disulfide bond</keyword>
<keyword id="KW-0964">Secreted</keyword>
<keyword id="KW-0732">Signal</keyword>
<keyword id="KW-0800">Toxin</keyword>
<protein>
    <recommendedName>
        <fullName evidence="3">Teratocyte protein CftICK-IV</fullName>
    </recommendedName>
</protein>
<feature type="signal peptide" evidence="1">
    <location>
        <begin position="1"/>
        <end position="21"/>
    </location>
</feature>
<feature type="chain" id="PRO_5035438946" description="Teratocyte protein CftICK-IV" evidence="4">
    <location>
        <begin position="22"/>
        <end position="82"/>
    </location>
</feature>
<name>TP4_COTFL</name>
<proteinExistence type="inferred from homology"/>
<reference evidence="5" key="1">
    <citation type="journal article" date="2022" name="J. Insect Physiol.">
        <title>Proteotranscriptomics reveals the secretory dynamics of teratocytes, regulators of parasitization by an endoparasitoid wasp.</title>
        <authorList>
            <person name="Pinto C.P.G."/>
            <person name="Walker A.A."/>
            <person name="Robinson S.D."/>
            <person name="King G.F."/>
            <person name="Rossi G.D."/>
        </authorList>
    </citation>
    <scope>NUCLEOTIDE SEQUENCE [MRNA]</scope>
</reference>
<reference key="2">
    <citation type="journal article" date="2022" name="Insect Sci.">
        <title>Immunosuppressive, antimicrobial and insecticidal activities of inhibitor cystine knot peptides produced by teratocytes of the endoparasitoid wasp Cotesia flavipes (Hymenoptera: Braconidae).</title>
        <authorList>
            <person name="Pinto C.P.G."/>
            <person name="Walker A.A."/>
            <person name="King G.F."/>
            <person name="Rossi G.D."/>
        </authorList>
    </citation>
    <scope>FUNCTION</scope>
    <scope>RECOMBINANT EXPRESSION</scope>
</reference>